<protein>
    <recommendedName>
        <fullName>Adenosine kinase</fullName>
        <shortName>AK</shortName>
        <ecNumber evidence="3">2.7.1.20</ecNumber>
    </recommendedName>
    <alternativeName>
        <fullName>Adenosine 5'-phosphotransferase</fullName>
    </alternativeName>
</protein>
<dbReference type="EC" id="2.7.1.20" evidence="3"/>
<dbReference type="EMBL" id="U26588">
    <property type="protein sequence ID" value="AAA91648.1"/>
    <property type="status" value="ALT_FRAME"/>
    <property type="molecule type" value="mRNA"/>
</dbReference>
<dbReference type="EMBL" id="JH000053">
    <property type="protein sequence ID" value="EGV97815.1"/>
    <property type="molecule type" value="Genomic_DNA"/>
</dbReference>
<dbReference type="PIR" id="JC7368">
    <property type="entry name" value="JC7368"/>
</dbReference>
<dbReference type="RefSeq" id="NP_001231779.1">
    <property type="nucleotide sequence ID" value="NM_001244850.1"/>
</dbReference>
<dbReference type="SMR" id="P55262"/>
<dbReference type="STRING" id="10029.G3GWQ3"/>
<dbReference type="PaxDb" id="10029-NP_001231779.1"/>
<dbReference type="Ensembl" id="ENSCGRT00001020046.1">
    <property type="protein sequence ID" value="ENSCGRP00001015803.1"/>
    <property type="gene ID" value="ENSCGRG00001016316.1"/>
</dbReference>
<dbReference type="Ensembl" id="ENSCGRT00015024907">
    <property type="protein sequence ID" value="ENSCGRP00015020238"/>
    <property type="gene ID" value="ENSCGRG00015015437"/>
</dbReference>
<dbReference type="GeneID" id="100736551"/>
<dbReference type="KEGG" id="cge:100736551"/>
<dbReference type="CTD" id="132"/>
<dbReference type="eggNOG" id="KOG2854">
    <property type="taxonomic scope" value="Eukaryota"/>
</dbReference>
<dbReference type="GeneTree" id="ENSGT00390000014320"/>
<dbReference type="OMA" id="RTMCTYL"/>
<dbReference type="OrthoDB" id="432447at2759"/>
<dbReference type="UniPathway" id="UPA00588">
    <property type="reaction ID" value="UER00659"/>
</dbReference>
<dbReference type="Proteomes" id="UP000001075">
    <property type="component" value="Unassembled WGS sequence"/>
</dbReference>
<dbReference type="Proteomes" id="UP000694386">
    <property type="component" value="Unplaced"/>
</dbReference>
<dbReference type="Proteomes" id="UP001108280">
    <property type="component" value="Chromosome 1"/>
</dbReference>
<dbReference type="GO" id="GO:0005829">
    <property type="term" value="C:cytosol"/>
    <property type="evidence" value="ECO:0007669"/>
    <property type="project" value="Ensembl"/>
</dbReference>
<dbReference type="GO" id="GO:0005654">
    <property type="term" value="C:nucleoplasm"/>
    <property type="evidence" value="ECO:0007669"/>
    <property type="project" value="Ensembl"/>
</dbReference>
<dbReference type="GO" id="GO:0005886">
    <property type="term" value="C:plasma membrane"/>
    <property type="evidence" value="ECO:0007669"/>
    <property type="project" value="Ensembl"/>
</dbReference>
<dbReference type="GO" id="GO:0004001">
    <property type="term" value="F:adenosine kinase activity"/>
    <property type="evidence" value="ECO:0000315"/>
    <property type="project" value="UniProtKB"/>
</dbReference>
<dbReference type="GO" id="GO:0005524">
    <property type="term" value="F:ATP binding"/>
    <property type="evidence" value="ECO:0007669"/>
    <property type="project" value="UniProtKB-KW"/>
</dbReference>
<dbReference type="GO" id="GO:0004136">
    <property type="term" value="F:deoxyadenosine kinase activity"/>
    <property type="evidence" value="ECO:0007669"/>
    <property type="project" value="Ensembl"/>
</dbReference>
<dbReference type="GO" id="GO:0046872">
    <property type="term" value="F:metal ion binding"/>
    <property type="evidence" value="ECO:0007669"/>
    <property type="project" value="UniProtKB-KW"/>
</dbReference>
<dbReference type="GO" id="GO:0044209">
    <property type="term" value="P:AMP salvage"/>
    <property type="evidence" value="ECO:0007669"/>
    <property type="project" value="UniProtKB-UniPathway"/>
</dbReference>
<dbReference type="GO" id="GO:0106383">
    <property type="term" value="P:dAMP salvage"/>
    <property type="evidence" value="ECO:0007669"/>
    <property type="project" value="Ensembl"/>
</dbReference>
<dbReference type="GO" id="GO:0006175">
    <property type="term" value="P:dATP biosynthetic process"/>
    <property type="evidence" value="ECO:0007669"/>
    <property type="project" value="Ensembl"/>
</dbReference>
<dbReference type="GO" id="GO:0032263">
    <property type="term" value="P:GMP salvage"/>
    <property type="evidence" value="ECO:0007669"/>
    <property type="project" value="Ensembl"/>
</dbReference>
<dbReference type="GO" id="GO:0006144">
    <property type="term" value="P:purine nucleobase metabolic process"/>
    <property type="evidence" value="ECO:0007669"/>
    <property type="project" value="TreeGrafter"/>
</dbReference>
<dbReference type="GO" id="GO:0006166">
    <property type="term" value="P:purine ribonucleoside salvage"/>
    <property type="evidence" value="ECO:0007669"/>
    <property type="project" value="UniProtKB-KW"/>
</dbReference>
<dbReference type="CDD" id="cd01168">
    <property type="entry name" value="adenosine_kinase"/>
    <property type="match status" value="1"/>
</dbReference>
<dbReference type="FunFam" id="3.40.1190.20:FF:000175">
    <property type="entry name" value="Adenosine kinase"/>
    <property type="match status" value="1"/>
</dbReference>
<dbReference type="Gene3D" id="3.40.1190.20">
    <property type="match status" value="1"/>
</dbReference>
<dbReference type="InterPro" id="IPR001805">
    <property type="entry name" value="Adenokinase"/>
</dbReference>
<dbReference type="InterPro" id="IPR002173">
    <property type="entry name" value="Carboh/pur_kinase_PfkB_CS"/>
</dbReference>
<dbReference type="InterPro" id="IPR011611">
    <property type="entry name" value="PfkB_dom"/>
</dbReference>
<dbReference type="InterPro" id="IPR029056">
    <property type="entry name" value="Ribokinase-like"/>
</dbReference>
<dbReference type="PANTHER" id="PTHR45769">
    <property type="entry name" value="ADENOSINE KINASE"/>
    <property type="match status" value="1"/>
</dbReference>
<dbReference type="PANTHER" id="PTHR45769:SF3">
    <property type="entry name" value="ADENOSINE KINASE"/>
    <property type="match status" value="1"/>
</dbReference>
<dbReference type="Pfam" id="PF00294">
    <property type="entry name" value="PfkB"/>
    <property type="match status" value="1"/>
</dbReference>
<dbReference type="PRINTS" id="PR00989">
    <property type="entry name" value="ADENOKINASE"/>
</dbReference>
<dbReference type="SUPFAM" id="SSF53613">
    <property type="entry name" value="Ribokinase-like"/>
    <property type="match status" value="1"/>
</dbReference>
<dbReference type="PROSITE" id="PS00584">
    <property type="entry name" value="PFKB_KINASES_2"/>
    <property type="match status" value="1"/>
</dbReference>
<evidence type="ECO:0000250" key="1"/>
<evidence type="ECO:0000250" key="2">
    <source>
        <dbReference type="UniProtKB" id="P55263"/>
    </source>
</evidence>
<evidence type="ECO:0000269" key="3">
    <source>
    </source>
</evidence>
<evidence type="ECO:0000305" key="4"/>
<evidence type="ECO:0000305" key="5">
    <source>
    </source>
</evidence>
<sequence length="361" mass="40246">MAAAEEPKPKKLKVEAPQALSENVLFGMGNPLLDISAVVDKDFLDKYSLKPNDQILAEEKHKELFDELVRKFKVEYHAGGSTQNSIKVAQWMIQKPHKAATFFGCIGIDKFGEILKSKAAEAHVDAHYYEQNEQPTGTCAACITGDNRSLVANLAAANCYKKEKHLDLENNWVLVEKARVYYIAGFFLTVSPESVLKVARYAAENNRIFTLNLSAPFISQFFKESLMEVMPYVDILFGNETEAATFAREQGFETKDIKEIAKKAQALAKVNSKRPRTVVFTQGRDDTVVATENEVMAFAVLDQNQKEIIDTNGAGDAFVGGFLSQLVYNKPLTECIRAGHYAASVIIRRTGCTFPEKPDFH</sequence>
<organism>
    <name type="scientific">Cricetulus griseus</name>
    <name type="common">Chinese hamster</name>
    <name type="synonym">Cricetulus barabensis griseus</name>
    <dbReference type="NCBI Taxonomy" id="10029"/>
    <lineage>
        <taxon>Eukaryota</taxon>
        <taxon>Metazoa</taxon>
        <taxon>Chordata</taxon>
        <taxon>Craniata</taxon>
        <taxon>Vertebrata</taxon>
        <taxon>Euteleostomi</taxon>
        <taxon>Mammalia</taxon>
        <taxon>Eutheria</taxon>
        <taxon>Euarchontoglires</taxon>
        <taxon>Glires</taxon>
        <taxon>Rodentia</taxon>
        <taxon>Myomorpha</taxon>
        <taxon>Muroidea</taxon>
        <taxon>Cricetidae</taxon>
        <taxon>Cricetinae</taxon>
        <taxon>Cricetulus</taxon>
    </lineage>
</organism>
<accession>P55262</accession>
<accession>G3GWQ3</accession>
<proteinExistence type="evidence at protein level"/>
<feature type="chain" id="PRO_0000080052" description="Adenosine kinase">
    <location>
        <begin position="1"/>
        <end position="361"/>
    </location>
</feature>
<feature type="short sequence motif" description="Nuclear localization signal" evidence="2">
    <location>
        <begin position="7"/>
        <end position="15"/>
    </location>
</feature>
<feature type="active site" evidence="2">
    <location>
        <position position="316"/>
    </location>
</feature>
<feature type="active site" description="Proton acceptor" evidence="2">
    <location>
        <position position="316"/>
    </location>
</feature>
<feature type="binding site" evidence="2">
    <location>
        <position position="34"/>
    </location>
    <ligand>
        <name>adenosine</name>
        <dbReference type="ChEBI" id="CHEBI:16335"/>
    </ligand>
</feature>
<feature type="binding site" evidence="2">
    <location>
        <position position="48"/>
    </location>
    <ligand>
        <name>Mg(2+)</name>
        <dbReference type="ChEBI" id="CHEBI:18420"/>
        <label>1</label>
    </ligand>
</feature>
<feature type="binding site" evidence="2">
    <location>
        <position position="146"/>
    </location>
    <ligand>
        <name>Mg(2+)</name>
        <dbReference type="ChEBI" id="CHEBI:18420"/>
        <label>2</label>
    </ligand>
</feature>
<feature type="binding site" evidence="2">
    <location>
        <position position="147"/>
    </location>
    <ligand>
        <name>Mg(2+)</name>
        <dbReference type="ChEBI" id="CHEBI:18420"/>
        <label>2</label>
    </ligand>
</feature>
<feature type="binding site" evidence="2">
    <location>
        <position position="305"/>
    </location>
    <ligand>
        <name>adenosine</name>
        <dbReference type="ChEBI" id="CHEBI:16335"/>
    </ligand>
</feature>
<feature type="modified residue" description="Phosphotyrosine" evidence="2">
    <location>
        <position position="76"/>
    </location>
</feature>
<name>ADK_CRIGR</name>
<gene>
    <name type="primary">ADK</name>
</gene>
<keyword id="KW-0067">ATP-binding</keyword>
<keyword id="KW-0903">Direct protein sequencing</keyword>
<keyword id="KW-0418">Kinase</keyword>
<keyword id="KW-0460">Magnesium</keyword>
<keyword id="KW-0479">Metal-binding</keyword>
<keyword id="KW-0547">Nucleotide-binding</keyword>
<keyword id="KW-0539">Nucleus</keyword>
<keyword id="KW-0597">Phosphoprotein</keyword>
<keyword id="KW-0660">Purine salvage</keyword>
<keyword id="KW-1185">Reference proteome</keyword>
<keyword id="KW-0808">Transferase</keyword>
<reference key="1">
    <citation type="journal article" date="1996" name="Eur. J. Biochem.">
        <title>Cloning and characterization of cDNA for adenosine kinase from mammalian (Chinese hamster, mouse, human and rat) species. High frequency mutants of Chinese hamster ovary cells involve structural alterations in the gene.</title>
        <authorList>
            <person name="Singh B."/>
            <person name="Hao W."/>
            <person name="Wu Z.-C."/>
            <person name="Eigl B."/>
            <person name="Gupta R.S."/>
        </authorList>
    </citation>
    <scope>NUCLEOTIDE SEQUENCE [MRNA]</scope>
    <scope>PARTIAL PROTEIN SEQUENCE</scope>
    <scope>CATALYTIC ACTIVITY</scope>
    <scope>FUNCTION</scope>
    <source>
        <tissue>Liver</tissue>
        <tissue>Ovary</tissue>
    </source>
</reference>
<reference key="2">
    <citation type="journal article" date="2011" name="Nat. Biotechnol.">
        <title>The genomic sequence of the Chinese hamster ovary (CHO)-K1 cell line.</title>
        <authorList>
            <person name="Xu X."/>
            <person name="Nagarajan H."/>
            <person name="Lewis N.E."/>
            <person name="Pan S."/>
            <person name="Cai Z."/>
            <person name="Liu X."/>
            <person name="Chen W."/>
            <person name="Xie M."/>
            <person name="Wang W."/>
            <person name="Hammond S."/>
            <person name="Andersen M.R."/>
            <person name="Neff N."/>
            <person name="Passarelli B."/>
            <person name="Koh W."/>
            <person name="Fan H.C."/>
            <person name="Wang J."/>
            <person name="Gui Y."/>
            <person name="Lee K.H."/>
            <person name="Betenbaugh M.J."/>
            <person name="Quake S.R."/>
            <person name="Famili I."/>
            <person name="Palsson B.O."/>
            <person name="Wang J."/>
        </authorList>
    </citation>
    <scope>NUCLEOTIDE SEQUENCE [LARGE SCALE GENOMIC DNA]</scope>
</reference>
<comment type="function">
    <text evidence="3">Catalyzes the phosphorylation of the purine nucleoside adenosine at the 5' position in an ATP-dependent manner. Serves as a potential regulator of concentrations of extracellular adenosine and intracellular adenine nucleotides.</text>
</comment>
<comment type="catalytic activity">
    <reaction evidence="3">
        <text>adenosine + ATP = AMP + ADP + H(+)</text>
        <dbReference type="Rhea" id="RHEA:20824"/>
        <dbReference type="ChEBI" id="CHEBI:15378"/>
        <dbReference type="ChEBI" id="CHEBI:16335"/>
        <dbReference type="ChEBI" id="CHEBI:30616"/>
        <dbReference type="ChEBI" id="CHEBI:456215"/>
        <dbReference type="ChEBI" id="CHEBI:456216"/>
        <dbReference type="EC" id="2.7.1.20"/>
    </reaction>
    <physiologicalReaction direction="left-to-right" evidence="5">
        <dbReference type="Rhea" id="RHEA:20825"/>
    </physiologicalReaction>
</comment>
<comment type="cofactor">
    <cofactor evidence="2">
        <name>Mg(2+)</name>
        <dbReference type="ChEBI" id="CHEBI:18420"/>
    </cofactor>
    <text evidence="2">Binds 3 Mg(2+) ions per subunit.</text>
</comment>
<comment type="activity regulation">
    <text evidence="2">Activity is inhibited by 5-iodotubercidin and 5'-amino-5'-deoxyadenosine.</text>
</comment>
<comment type="pathway">
    <text>Purine metabolism; AMP biosynthesis via salvage pathway; AMP from adenosine: step 1/1.</text>
</comment>
<comment type="subunit">
    <text evidence="1">Monomer.</text>
</comment>
<comment type="subcellular location">
    <subcellularLocation>
        <location evidence="2">Nucleus</location>
    </subcellularLocation>
</comment>
<comment type="PTM">
    <text>The N-terminus is blocked.</text>
</comment>
<comment type="similarity">
    <text evidence="4">Belongs to the carbohydrate kinase PfkB family.</text>
</comment>
<comment type="sequence caution" evidence="4">
    <conflict type="frameshift">
        <sequence resource="EMBL-CDS" id="AAA91648"/>
    </conflict>
</comment>